<reference key="1">
    <citation type="journal article" date="1989" name="Yeast">
        <title>Cloning and analysis of the Kluyveromyces lactis TRP1 gene: a chromosomal locus flanked by genes encoding inorganic pyrophosphatase and histone H3.</title>
        <authorList>
            <person name="Stark M.J.R."/>
            <person name="Milner J.S."/>
        </authorList>
    </citation>
    <scope>NUCLEOTIDE SEQUENCE [GENOMIC DNA]</scope>
</reference>
<reference key="2">
    <citation type="journal article" date="2004" name="Nature">
        <title>Genome evolution in yeasts.</title>
        <authorList>
            <person name="Dujon B."/>
            <person name="Sherman D."/>
            <person name="Fischer G."/>
            <person name="Durrens P."/>
            <person name="Casaregola S."/>
            <person name="Lafontaine I."/>
            <person name="de Montigny J."/>
            <person name="Marck C."/>
            <person name="Neuveglise C."/>
            <person name="Talla E."/>
            <person name="Goffard N."/>
            <person name="Frangeul L."/>
            <person name="Aigle M."/>
            <person name="Anthouard V."/>
            <person name="Babour A."/>
            <person name="Barbe V."/>
            <person name="Barnay S."/>
            <person name="Blanchin S."/>
            <person name="Beckerich J.-M."/>
            <person name="Beyne E."/>
            <person name="Bleykasten C."/>
            <person name="Boisrame A."/>
            <person name="Boyer J."/>
            <person name="Cattolico L."/>
            <person name="Confanioleri F."/>
            <person name="de Daruvar A."/>
            <person name="Despons L."/>
            <person name="Fabre E."/>
            <person name="Fairhead C."/>
            <person name="Ferry-Dumazet H."/>
            <person name="Groppi A."/>
            <person name="Hantraye F."/>
            <person name="Hennequin C."/>
            <person name="Jauniaux N."/>
            <person name="Joyet P."/>
            <person name="Kachouri R."/>
            <person name="Kerrest A."/>
            <person name="Koszul R."/>
            <person name="Lemaire M."/>
            <person name="Lesur I."/>
            <person name="Ma L."/>
            <person name="Muller H."/>
            <person name="Nicaud J.-M."/>
            <person name="Nikolski M."/>
            <person name="Oztas S."/>
            <person name="Ozier-Kalogeropoulos O."/>
            <person name="Pellenz S."/>
            <person name="Potier S."/>
            <person name="Richard G.-F."/>
            <person name="Straub M.-L."/>
            <person name="Suleau A."/>
            <person name="Swennen D."/>
            <person name="Tekaia F."/>
            <person name="Wesolowski-Louvel M."/>
            <person name="Westhof E."/>
            <person name="Wirth B."/>
            <person name="Zeniou-Meyer M."/>
            <person name="Zivanovic Y."/>
            <person name="Bolotin-Fukuhara M."/>
            <person name="Thierry A."/>
            <person name="Bouchier C."/>
            <person name="Caudron B."/>
            <person name="Scarpelli C."/>
            <person name="Gaillardin C."/>
            <person name="Weissenbach J."/>
            <person name="Wincker P."/>
            <person name="Souciet J.-L."/>
        </authorList>
    </citation>
    <scope>NUCLEOTIDE SEQUENCE [LARGE SCALE GENOMIC DNA]</scope>
    <source>
        <strain>ATCC 8585 / CBS 2359 / DSM 70799 / NBRC 1267 / NRRL Y-1140 / WM37</strain>
    </source>
</reference>
<feature type="chain" id="PRO_0000066270" description="Uncharacterized protein KLLA0E17732g">
    <location>
        <begin position="1"/>
        <end position="91"/>
    </location>
</feature>
<keyword id="KW-1185">Reference proteome</keyword>
<accession>P13999</accession>
<gene>
    <name type="ordered locus">KLLA0E17732g</name>
</gene>
<dbReference type="EMBL" id="X14230">
    <property type="protein sequence ID" value="CAA32447.1"/>
    <property type="molecule type" value="Genomic_DNA"/>
</dbReference>
<dbReference type="EMBL" id="CR382125">
    <property type="status" value="NOT_ANNOTATED_CDS"/>
    <property type="molecule type" value="Genomic_DNA"/>
</dbReference>
<dbReference type="PIR" id="S07895">
    <property type="entry name" value="S07895"/>
</dbReference>
<dbReference type="PaxDb" id="284590-P13999"/>
<dbReference type="InParanoid" id="P13999"/>
<dbReference type="Proteomes" id="UP000000598">
    <property type="component" value="Chromosome E"/>
</dbReference>
<name>YIPP_KLULA</name>
<protein>
    <recommendedName>
        <fullName>Uncharacterized protein KLLA0E17732g</fullName>
    </recommendedName>
</protein>
<proteinExistence type="predicted"/>
<sequence length="91" mass="10889">MIKPNDFKKNTLCNCNCIQSDQIYTDPNVYPSTPTHEHRISHFLNYRFFKHQSASFPSCRSLKVDDLRKKKLQNSYINRNEKCLHWFTIGH</sequence>
<organism>
    <name type="scientific">Kluyveromyces lactis (strain ATCC 8585 / CBS 2359 / DSM 70799 / NBRC 1267 / NRRL Y-1140 / WM37)</name>
    <name type="common">Yeast</name>
    <name type="synonym">Candida sphaerica</name>
    <dbReference type="NCBI Taxonomy" id="284590"/>
    <lineage>
        <taxon>Eukaryota</taxon>
        <taxon>Fungi</taxon>
        <taxon>Dikarya</taxon>
        <taxon>Ascomycota</taxon>
        <taxon>Saccharomycotina</taxon>
        <taxon>Saccharomycetes</taxon>
        <taxon>Saccharomycetales</taxon>
        <taxon>Saccharomycetaceae</taxon>
        <taxon>Kluyveromyces</taxon>
    </lineage>
</organism>